<evidence type="ECO:0000250" key="1"/>
<evidence type="ECO:0000255" key="2">
    <source>
        <dbReference type="HAMAP-Rule" id="MF_01318"/>
    </source>
</evidence>
<evidence type="ECO:0000305" key="3"/>
<evidence type="ECO:0007829" key="4">
    <source>
        <dbReference type="PDB" id="1DWU"/>
    </source>
</evidence>
<reference key="1">
    <citation type="submission" date="1998-01" db="EMBL/GenBank/DDBJ databases">
        <authorList>
            <person name="Linhart A."/>
            <person name="Piendl W."/>
        </authorList>
    </citation>
    <scope>NUCLEOTIDE SEQUENCE [GENOMIC DNA]</scope>
</reference>
<reference key="2">
    <citation type="journal article" date="1998" name="Eur. J. Biochem.">
        <title>Interaction of ribosomal L1 proteins from mesophilic and thermophilic Archaea and Bacteria with specific L1-binding sites on 23S rRNA and mRNA.</title>
        <authorList>
            <person name="Koehrer C."/>
            <person name="Mayer C."/>
            <person name="Neumair O."/>
            <person name="Groebner P."/>
            <person name="Piendl W."/>
        </authorList>
    </citation>
    <scope>BINDING TO ENDOGENOUS 23S RRNA</scope>
    <scope>TO METHANOCOCCUS VANNIELII L1 MRNA</scope>
</reference>
<reference key="3">
    <citation type="journal article" date="2002" name="Acta Crystallogr. D">
        <title>Structure of ribosomal protein L1 from Methanococcus thermolithotrophicus. Functionally important structural invariants on the L1 surface.</title>
        <authorList>
            <person name="Nevskaya N."/>
            <person name="Tishchenko S."/>
            <person name="Paveliev M."/>
            <person name="Smolinskaya Y."/>
            <person name="Fedorov R."/>
            <person name="Piendl W."/>
            <person name="Nakamura Y."/>
            <person name="Toyoda T."/>
            <person name="Garber M.B."/>
            <person name="Nikonov S."/>
        </authorList>
    </citation>
    <scope>X-RAY CRYSTALLOGRAPHY (2.8 ANGSTROMS)</scope>
</reference>
<feature type="chain" id="PRO_0000125802" description="Large ribosomal subunit protein uL1">
    <location>
        <begin position="1"/>
        <end position="213"/>
    </location>
</feature>
<feature type="helix" evidence="4">
    <location>
        <begin position="3"/>
        <end position="15"/>
    </location>
</feature>
<feature type="strand" evidence="4">
    <location>
        <begin position="25"/>
        <end position="32"/>
    </location>
</feature>
<feature type="helix" evidence="4">
    <location>
        <begin position="40"/>
        <end position="42"/>
    </location>
</feature>
<feature type="strand" evidence="4">
    <location>
        <begin position="45"/>
        <end position="49"/>
    </location>
</feature>
<feature type="strand" evidence="4">
    <location>
        <begin position="60"/>
        <end position="63"/>
    </location>
</feature>
<feature type="helix" evidence="4">
    <location>
        <begin position="67"/>
        <end position="74"/>
    </location>
</feature>
<feature type="strand" evidence="4">
    <location>
        <begin position="78"/>
        <end position="80"/>
    </location>
</feature>
<feature type="helix" evidence="4">
    <location>
        <begin position="82"/>
        <end position="90"/>
    </location>
</feature>
<feature type="helix" evidence="4">
    <location>
        <begin position="92"/>
        <end position="101"/>
    </location>
</feature>
<feature type="strand" evidence="4">
    <location>
        <begin position="103"/>
        <end position="108"/>
    </location>
</feature>
<feature type="helix" evidence="4">
    <location>
        <begin position="109"/>
        <end position="111"/>
    </location>
</feature>
<feature type="helix" evidence="4">
    <location>
        <begin position="112"/>
        <end position="117"/>
    </location>
</feature>
<feature type="helix" evidence="4">
    <location>
        <begin position="120"/>
        <end position="126"/>
    </location>
</feature>
<feature type="strand" evidence="4">
    <location>
        <begin position="131"/>
        <end position="133"/>
    </location>
</feature>
<feature type="helix" evidence="4">
    <location>
        <begin position="139"/>
        <end position="147"/>
    </location>
</feature>
<feature type="strand" evidence="4">
    <location>
        <begin position="149"/>
        <end position="153"/>
    </location>
</feature>
<feature type="strand" evidence="4">
    <location>
        <begin position="157"/>
        <end position="166"/>
    </location>
</feature>
<feature type="helix" evidence="4">
    <location>
        <begin position="171"/>
        <end position="188"/>
    </location>
</feature>
<feature type="strand" evidence="4">
    <location>
        <begin position="189"/>
        <end position="191"/>
    </location>
</feature>
<feature type="helix" evidence="4">
    <location>
        <begin position="192"/>
        <end position="195"/>
    </location>
</feature>
<feature type="strand" evidence="4">
    <location>
        <begin position="196"/>
        <end position="202"/>
    </location>
</feature>
<sequence length="213" mass="23794">MDRENILKAVKEARSLAKPRNFTQSLDLIINLKELDLSRPENRLKEQVVLPNGRGKEPKIAVIAKGDLAAQAEEMGLTVIRQDELEELGKNKKMAKKIANEHDFFIAQADMMPLVGKTLGPVLGPRGKMPQPVPANANLTPLVERLKKTVLINTRDKPLFHVLVGNEKMSDEELAENIEAILNTVSRKYEKGLYHVKSAYTKLTMGPPAQIEK</sequence>
<keyword id="KW-0002">3D-structure</keyword>
<keyword id="KW-0678">Repressor</keyword>
<keyword id="KW-0687">Ribonucleoprotein</keyword>
<keyword id="KW-0689">Ribosomal protein</keyword>
<keyword id="KW-0694">RNA-binding</keyword>
<keyword id="KW-0699">rRNA-binding</keyword>
<keyword id="KW-0810">Translation regulation</keyword>
<keyword id="KW-0820">tRNA-binding</keyword>
<organism>
    <name type="scientific">Methanothermococcus thermolithotrophicus</name>
    <name type="common">Methanococcus thermolithotrophicus</name>
    <dbReference type="NCBI Taxonomy" id="2186"/>
    <lineage>
        <taxon>Archaea</taxon>
        <taxon>Methanobacteriati</taxon>
        <taxon>Methanobacteriota</taxon>
        <taxon>Methanomada group</taxon>
        <taxon>Methanococci</taxon>
        <taxon>Methanococcales</taxon>
        <taxon>Methanococcaceae</taxon>
        <taxon>Methanothermococcus</taxon>
    </lineage>
</organism>
<accession>O52704</accession>
<proteinExistence type="evidence at protein level"/>
<name>RL1_METTL</name>
<comment type="function">
    <text evidence="1">Probably involved in E site tRNA release (By similarity). Binds directly to 23S rRNA.</text>
</comment>
<comment type="function">
    <text evidence="2">Protein L1 is also a translational repressor protein, it controls the translation of its operon by binding to its mRNA.</text>
</comment>
<comment type="subunit">
    <text>Part of the 50S ribosomal subunit.</text>
</comment>
<comment type="similarity">
    <text evidence="2">Belongs to the universal ribosomal protein uL1 family.</text>
</comment>
<gene>
    <name evidence="2" type="primary">rpl1</name>
</gene>
<protein>
    <recommendedName>
        <fullName evidence="2">Large ribosomal subunit protein uL1</fullName>
    </recommendedName>
    <alternativeName>
        <fullName evidence="3">50S ribosomal protein L1</fullName>
    </alternativeName>
    <alternativeName>
        <fullName>ML6</fullName>
    </alternativeName>
    <alternativeName>
        <fullName>MvaL1</fullName>
    </alternativeName>
</protein>
<dbReference type="EMBL" id="AF044919">
    <property type="protein sequence ID" value="AAC64510.1"/>
    <property type="molecule type" value="Genomic_DNA"/>
</dbReference>
<dbReference type="PDB" id="1DWU">
    <property type="method" value="X-ray"/>
    <property type="resolution" value="2.80 A"/>
    <property type="chains" value="A/B=1-213"/>
</dbReference>
<dbReference type="PDBsum" id="1DWU"/>
<dbReference type="SMR" id="O52704"/>
<dbReference type="EvolutionaryTrace" id="O52704"/>
<dbReference type="GO" id="GO:0015934">
    <property type="term" value="C:large ribosomal subunit"/>
    <property type="evidence" value="ECO:0007669"/>
    <property type="project" value="InterPro"/>
</dbReference>
<dbReference type="GO" id="GO:0019843">
    <property type="term" value="F:rRNA binding"/>
    <property type="evidence" value="ECO:0007669"/>
    <property type="project" value="UniProtKB-UniRule"/>
</dbReference>
<dbReference type="GO" id="GO:0003735">
    <property type="term" value="F:structural constituent of ribosome"/>
    <property type="evidence" value="ECO:0007669"/>
    <property type="project" value="InterPro"/>
</dbReference>
<dbReference type="GO" id="GO:0000049">
    <property type="term" value="F:tRNA binding"/>
    <property type="evidence" value="ECO:0007669"/>
    <property type="project" value="UniProtKB-KW"/>
</dbReference>
<dbReference type="GO" id="GO:0006417">
    <property type="term" value="P:regulation of translation"/>
    <property type="evidence" value="ECO:0007669"/>
    <property type="project" value="UniProtKB-KW"/>
</dbReference>
<dbReference type="GO" id="GO:0006412">
    <property type="term" value="P:translation"/>
    <property type="evidence" value="ECO:0007669"/>
    <property type="project" value="UniProtKB-UniRule"/>
</dbReference>
<dbReference type="CDD" id="cd00403">
    <property type="entry name" value="Ribosomal_L1"/>
    <property type="match status" value="1"/>
</dbReference>
<dbReference type="FunFam" id="3.40.50.790:FF:000005">
    <property type="entry name" value="50S ribosomal protein L1"/>
    <property type="match status" value="1"/>
</dbReference>
<dbReference type="Gene3D" id="3.30.190.20">
    <property type="match status" value="1"/>
</dbReference>
<dbReference type="Gene3D" id="3.40.50.790">
    <property type="match status" value="1"/>
</dbReference>
<dbReference type="HAMAP" id="MF_01318_A">
    <property type="entry name" value="Ribosomal_uL1_A"/>
    <property type="match status" value="1"/>
</dbReference>
<dbReference type="InterPro" id="IPR002143">
    <property type="entry name" value="Ribosomal_uL1"/>
</dbReference>
<dbReference type="InterPro" id="IPR023674">
    <property type="entry name" value="Ribosomal_uL1-like"/>
</dbReference>
<dbReference type="InterPro" id="IPR028364">
    <property type="entry name" value="Ribosomal_uL1/biogenesis"/>
</dbReference>
<dbReference type="InterPro" id="IPR016095">
    <property type="entry name" value="Ribosomal_uL1_3-a/b-sand"/>
</dbReference>
<dbReference type="InterPro" id="IPR023669">
    <property type="entry name" value="Ribosomal_uL1_arc"/>
</dbReference>
<dbReference type="InterPro" id="IPR023673">
    <property type="entry name" value="Ribosomal_uL1_CS"/>
</dbReference>
<dbReference type="NCBIfam" id="NF003244">
    <property type="entry name" value="PRK04203.1"/>
    <property type="match status" value="1"/>
</dbReference>
<dbReference type="PANTHER" id="PTHR36427">
    <property type="entry name" value="54S RIBOSOMAL PROTEIN L1, MITOCHONDRIAL"/>
    <property type="match status" value="1"/>
</dbReference>
<dbReference type="PANTHER" id="PTHR36427:SF3">
    <property type="entry name" value="LARGE RIBOSOMAL SUBUNIT PROTEIN UL1M"/>
    <property type="match status" value="1"/>
</dbReference>
<dbReference type="Pfam" id="PF00687">
    <property type="entry name" value="Ribosomal_L1"/>
    <property type="match status" value="1"/>
</dbReference>
<dbReference type="PIRSF" id="PIRSF002155">
    <property type="entry name" value="Ribosomal_L1"/>
    <property type="match status" value="1"/>
</dbReference>
<dbReference type="SUPFAM" id="SSF56808">
    <property type="entry name" value="Ribosomal protein L1"/>
    <property type="match status" value="1"/>
</dbReference>
<dbReference type="PROSITE" id="PS01199">
    <property type="entry name" value="RIBOSOMAL_L1"/>
    <property type="match status" value="1"/>
</dbReference>